<evidence type="ECO:0000255" key="1">
    <source>
        <dbReference type="HAMAP-Rule" id="MF_00435"/>
    </source>
</evidence>
<evidence type="ECO:0000255" key="2">
    <source>
        <dbReference type="PROSITE-ProRule" id="PRU01197"/>
    </source>
</evidence>
<evidence type="ECO:0000255" key="3">
    <source>
        <dbReference type="PROSITE-ProRule" id="PRU01198"/>
    </source>
</evidence>
<keyword id="KW-0028">Amino-acid biosynthesis</keyword>
<keyword id="KW-0100">Branched-chain amino acid biosynthesis</keyword>
<keyword id="KW-0460">Magnesium</keyword>
<keyword id="KW-0479">Metal-binding</keyword>
<keyword id="KW-0521">NADP</keyword>
<keyword id="KW-0560">Oxidoreductase</keyword>
<keyword id="KW-1185">Reference proteome</keyword>
<keyword id="KW-0677">Repeat</keyword>
<feature type="chain" id="PRO_1000190953" description="Ketol-acid reductoisomerase (NADP(+))">
    <location>
        <begin position="1"/>
        <end position="491"/>
    </location>
</feature>
<feature type="domain" description="KARI N-terminal Rossmann" evidence="2">
    <location>
        <begin position="15"/>
        <end position="208"/>
    </location>
</feature>
<feature type="domain" description="KARI C-terminal knotted 1" evidence="3">
    <location>
        <begin position="209"/>
        <end position="344"/>
    </location>
</feature>
<feature type="domain" description="KARI C-terminal knotted 2" evidence="3">
    <location>
        <begin position="345"/>
        <end position="484"/>
    </location>
</feature>
<feature type="active site" evidence="1">
    <location>
        <position position="132"/>
    </location>
</feature>
<feature type="binding site" evidence="1">
    <location>
        <begin position="45"/>
        <end position="48"/>
    </location>
    <ligand>
        <name>NADP(+)</name>
        <dbReference type="ChEBI" id="CHEBI:58349"/>
    </ligand>
</feature>
<feature type="binding site" evidence="1">
    <location>
        <position position="68"/>
    </location>
    <ligand>
        <name>NADP(+)</name>
        <dbReference type="ChEBI" id="CHEBI:58349"/>
    </ligand>
</feature>
<feature type="binding site" evidence="1">
    <location>
        <position position="76"/>
    </location>
    <ligand>
        <name>NADP(+)</name>
        <dbReference type="ChEBI" id="CHEBI:58349"/>
    </ligand>
</feature>
<feature type="binding site" evidence="1">
    <location>
        <position position="78"/>
    </location>
    <ligand>
        <name>NADP(+)</name>
        <dbReference type="ChEBI" id="CHEBI:58349"/>
    </ligand>
</feature>
<feature type="binding site" evidence="1">
    <location>
        <begin position="108"/>
        <end position="110"/>
    </location>
    <ligand>
        <name>NADP(+)</name>
        <dbReference type="ChEBI" id="CHEBI:58349"/>
    </ligand>
</feature>
<feature type="binding site" evidence="1">
    <location>
        <position position="158"/>
    </location>
    <ligand>
        <name>NADP(+)</name>
        <dbReference type="ChEBI" id="CHEBI:58349"/>
    </ligand>
</feature>
<feature type="binding site" evidence="1">
    <location>
        <position position="217"/>
    </location>
    <ligand>
        <name>Mg(2+)</name>
        <dbReference type="ChEBI" id="CHEBI:18420"/>
        <label>1</label>
    </ligand>
</feature>
<feature type="binding site" evidence="1">
    <location>
        <position position="217"/>
    </location>
    <ligand>
        <name>Mg(2+)</name>
        <dbReference type="ChEBI" id="CHEBI:18420"/>
        <label>2</label>
    </ligand>
</feature>
<feature type="binding site" evidence="1">
    <location>
        <position position="221"/>
    </location>
    <ligand>
        <name>Mg(2+)</name>
        <dbReference type="ChEBI" id="CHEBI:18420"/>
        <label>1</label>
    </ligand>
</feature>
<feature type="binding site" evidence="1">
    <location>
        <position position="389"/>
    </location>
    <ligand>
        <name>Mg(2+)</name>
        <dbReference type="ChEBI" id="CHEBI:18420"/>
        <label>2</label>
    </ligand>
</feature>
<feature type="binding site" evidence="1">
    <location>
        <position position="393"/>
    </location>
    <ligand>
        <name>Mg(2+)</name>
        <dbReference type="ChEBI" id="CHEBI:18420"/>
        <label>2</label>
    </ligand>
</feature>
<feature type="binding site" evidence="1">
    <location>
        <position position="414"/>
    </location>
    <ligand>
        <name>substrate</name>
    </ligand>
</feature>
<proteinExistence type="inferred from homology"/>
<protein>
    <recommendedName>
        <fullName evidence="1">Ketol-acid reductoisomerase (NADP(+))</fullName>
        <shortName evidence="1">KARI</shortName>
        <ecNumber evidence="1">1.1.1.86</ecNumber>
    </recommendedName>
    <alternativeName>
        <fullName evidence="1">Acetohydroxy-acid isomeroreductase</fullName>
        <shortName evidence="1">AHIR</shortName>
    </alternativeName>
    <alternativeName>
        <fullName evidence="1">Alpha-keto-beta-hydroxylacyl reductoisomerase</fullName>
    </alternativeName>
    <alternativeName>
        <fullName evidence="1">Ketol-acid reductoisomerase type 2</fullName>
    </alternativeName>
    <alternativeName>
        <fullName evidence="1">Ketol-acid reductoisomerase type II</fullName>
    </alternativeName>
</protein>
<gene>
    <name evidence="1" type="primary">ilvC</name>
    <name type="ordered locus">EC55989_4246</name>
</gene>
<reference key="1">
    <citation type="journal article" date="2009" name="PLoS Genet.">
        <title>Organised genome dynamics in the Escherichia coli species results in highly diverse adaptive paths.</title>
        <authorList>
            <person name="Touchon M."/>
            <person name="Hoede C."/>
            <person name="Tenaillon O."/>
            <person name="Barbe V."/>
            <person name="Baeriswyl S."/>
            <person name="Bidet P."/>
            <person name="Bingen E."/>
            <person name="Bonacorsi S."/>
            <person name="Bouchier C."/>
            <person name="Bouvet O."/>
            <person name="Calteau A."/>
            <person name="Chiapello H."/>
            <person name="Clermont O."/>
            <person name="Cruveiller S."/>
            <person name="Danchin A."/>
            <person name="Diard M."/>
            <person name="Dossat C."/>
            <person name="Karoui M.E."/>
            <person name="Frapy E."/>
            <person name="Garry L."/>
            <person name="Ghigo J.M."/>
            <person name="Gilles A.M."/>
            <person name="Johnson J."/>
            <person name="Le Bouguenec C."/>
            <person name="Lescat M."/>
            <person name="Mangenot S."/>
            <person name="Martinez-Jehanne V."/>
            <person name="Matic I."/>
            <person name="Nassif X."/>
            <person name="Oztas S."/>
            <person name="Petit M.A."/>
            <person name="Pichon C."/>
            <person name="Rouy Z."/>
            <person name="Ruf C.S."/>
            <person name="Schneider D."/>
            <person name="Tourret J."/>
            <person name="Vacherie B."/>
            <person name="Vallenet D."/>
            <person name="Medigue C."/>
            <person name="Rocha E.P.C."/>
            <person name="Denamur E."/>
        </authorList>
    </citation>
    <scope>NUCLEOTIDE SEQUENCE [LARGE SCALE GENOMIC DNA]</scope>
    <source>
        <strain>55989 / EAEC</strain>
    </source>
</reference>
<sequence>MANYFNTLNLRQQLAQLGKCRFMGRDEFADGASYLQGKKVVIVGCGAQGLNQGLNMRDSGLDISYALRKEAIAEKRASWRKATENGFKVGTYEELIPQADLVVNLTPDKQHSDVVRTVQPLMKDGAALGYSHGFNIVEVGEQIRKDITVVMVAPKCPGTEVREEYKRGFGVPTLIAVHPENDPKGEGMAIAKAWAAATGGHRAGVLESSFVAEVKSDLMGEQTILCGMLQAGSLLCFDKLVEEGTDPAYAEKLIQFGWETITEALKQGGITLMMDRLSNPAKLRAYALSEQLKEIMAPLFQKHMDDIISGEFSSGMMADWTNDDKKLLTWREETGKTAFETAPQYEGKIGEQEYFDKGVLMIAMVKAGVELAFETMVDSGIIEESAYYESLHELPLIANTIARKRLYEMNVVISDTAEYGNYLFSYACVPLLKPFMAELQPGDLGKAIPEGAVDNAQLRDVNEAIRSHAIEQVGKKLRGYMTDMKRIAVAG</sequence>
<accession>B7L8B5</accession>
<dbReference type="EC" id="1.1.1.86" evidence="1"/>
<dbReference type="EMBL" id="CU928145">
    <property type="protein sequence ID" value="CAV00875.1"/>
    <property type="molecule type" value="Genomic_DNA"/>
</dbReference>
<dbReference type="RefSeq" id="WP_001387186.1">
    <property type="nucleotide sequence ID" value="NC_011748.1"/>
</dbReference>
<dbReference type="SMR" id="B7L8B5"/>
<dbReference type="KEGG" id="eck:EC55989_4246"/>
<dbReference type="HOGENOM" id="CLU_551905_0_0_6"/>
<dbReference type="UniPathway" id="UPA00047">
    <property type="reaction ID" value="UER00056"/>
</dbReference>
<dbReference type="UniPathway" id="UPA00049">
    <property type="reaction ID" value="UER00060"/>
</dbReference>
<dbReference type="Proteomes" id="UP000000746">
    <property type="component" value="Chromosome"/>
</dbReference>
<dbReference type="GO" id="GO:0005829">
    <property type="term" value="C:cytosol"/>
    <property type="evidence" value="ECO:0007669"/>
    <property type="project" value="TreeGrafter"/>
</dbReference>
<dbReference type="GO" id="GO:0004455">
    <property type="term" value="F:ketol-acid reductoisomerase activity"/>
    <property type="evidence" value="ECO:0007669"/>
    <property type="project" value="UniProtKB-UniRule"/>
</dbReference>
<dbReference type="GO" id="GO:0000287">
    <property type="term" value="F:magnesium ion binding"/>
    <property type="evidence" value="ECO:0007669"/>
    <property type="project" value="UniProtKB-UniRule"/>
</dbReference>
<dbReference type="GO" id="GO:0009097">
    <property type="term" value="P:isoleucine biosynthetic process"/>
    <property type="evidence" value="ECO:0007669"/>
    <property type="project" value="UniProtKB-UniRule"/>
</dbReference>
<dbReference type="GO" id="GO:0009099">
    <property type="term" value="P:L-valine biosynthetic process"/>
    <property type="evidence" value="ECO:0007669"/>
    <property type="project" value="UniProtKB-UniRule"/>
</dbReference>
<dbReference type="FunFam" id="1.10.1040.10:FF:000007">
    <property type="entry name" value="Ketol-acid reductoisomerase (NADP(+))"/>
    <property type="match status" value="1"/>
</dbReference>
<dbReference type="FunFam" id="3.40.50.720:FF:000043">
    <property type="entry name" value="Ketol-acid reductoisomerase (NADP(+))"/>
    <property type="match status" value="1"/>
</dbReference>
<dbReference type="Gene3D" id="1.10.1040.10">
    <property type="entry name" value="N-(1-d-carboxylethyl)-l-norvaline Dehydrogenase, domain 2"/>
    <property type="match status" value="1"/>
</dbReference>
<dbReference type="Gene3D" id="3.40.50.720">
    <property type="entry name" value="NAD(P)-binding Rossmann-like Domain"/>
    <property type="match status" value="1"/>
</dbReference>
<dbReference type="HAMAP" id="MF_00435">
    <property type="entry name" value="IlvC"/>
    <property type="match status" value="1"/>
</dbReference>
<dbReference type="InterPro" id="IPR008927">
    <property type="entry name" value="6-PGluconate_DH-like_C_sf"/>
</dbReference>
<dbReference type="InterPro" id="IPR013328">
    <property type="entry name" value="6PGD_dom2"/>
</dbReference>
<dbReference type="InterPro" id="IPR013023">
    <property type="entry name" value="KARI"/>
</dbReference>
<dbReference type="InterPro" id="IPR000506">
    <property type="entry name" value="KARI_C"/>
</dbReference>
<dbReference type="InterPro" id="IPR013116">
    <property type="entry name" value="KARI_N"/>
</dbReference>
<dbReference type="InterPro" id="IPR036291">
    <property type="entry name" value="NAD(P)-bd_dom_sf"/>
</dbReference>
<dbReference type="NCBIfam" id="TIGR00465">
    <property type="entry name" value="ilvC"/>
    <property type="match status" value="1"/>
</dbReference>
<dbReference type="NCBIfam" id="NF003557">
    <property type="entry name" value="PRK05225.1"/>
    <property type="match status" value="1"/>
</dbReference>
<dbReference type="PANTHER" id="PTHR21371">
    <property type="entry name" value="KETOL-ACID REDUCTOISOMERASE, MITOCHONDRIAL"/>
    <property type="match status" value="1"/>
</dbReference>
<dbReference type="PANTHER" id="PTHR21371:SF1">
    <property type="entry name" value="KETOL-ACID REDUCTOISOMERASE, MITOCHONDRIAL"/>
    <property type="match status" value="1"/>
</dbReference>
<dbReference type="Pfam" id="PF01450">
    <property type="entry name" value="KARI_C"/>
    <property type="match status" value="2"/>
</dbReference>
<dbReference type="Pfam" id="PF07991">
    <property type="entry name" value="KARI_N"/>
    <property type="match status" value="1"/>
</dbReference>
<dbReference type="SUPFAM" id="SSF48179">
    <property type="entry name" value="6-phosphogluconate dehydrogenase C-terminal domain-like"/>
    <property type="match status" value="2"/>
</dbReference>
<dbReference type="SUPFAM" id="SSF51735">
    <property type="entry name" value="NAD(P)-binding Rossmann-fold domains"/>
    <property type="match status" value="1"/>
</dbReference>
<dbReference type="PROSITE" id="PS51851">
    <property type="entry name" value="KARI_C"/>
    <property type="match status" value="2"/>
</dbReference>
<dbReference type="PROSITE" id="PS51850">
    <property type="entry name" value="KARI_N"/>
    <property type="match status" value="1"/>
</dbReference>
<name>ILVC_ECO55</name>
<comment type="function">
    <text evidence="1">Involved in the biosynthesis of branched-chain amino acids (BCAA). Catalyzes an alkyl-migration followed by a ketol-acid reduction of (S)-2-acetolactate (S2AL) to yield (R)-2,3-dihydroxy-isovalerate. In the isomerase reaction, S2AL is rearranged via a Mg-dependent methyl migration to produce 3-hydroxy-3-methyl-2-ketobutyrate (HMKB). In the reductase reaction, this 2-ketoacid undergoes a metal-dependent reduction by NADPH to yield (R)-2,3-dihydroxy-isovalerate.</text>
</comment>
<comment type="catalytic activity">
    <reaction evidence="1">
        <text>(2R)-2,3-dihydroxy-3-methylbutanoate + NADP(+) = (2S)-2-acetolactate + NADPH + H(+)</text>
        <dbReference type="Rhea" id="RHEA:22068"/>
        <dbReference type="ChEBI" id="CHEBI:15378"/>
        <dbReference type="ChEBI" id="CHEBI:49072"/>
        <dbReference type="ChEBI" id="CHEBI:57783"/>
        <dbReference type="ChEBI" id="CHEBI:58349"/>
        <dbReference type="ChEBI" id="CHEBI:58476"/>
        <dbReference type="EC" id="1.1.1.86"/>
    </reaction>
</comment>
<comment type="catalytic activity">
    <reaction evidence="1">
        <text>(2R,3R)-2,3-dihydroxy-3-methylpentanoate + NADP(+) = (S)-2-ethyl-2-hydroxy-3-oxobutanoate + NADPH + H(+)</text>
        <dbReference type="Rhea" id="RHEA:13493"/>
        <dbReference type="ChEBI" id="CHEBI:15378"/>
        <dbReference type="ChEBI" id="CHEBI:49256"/>
        <dbReference type="ChEBI" id="CHEBI:49258"/>
        <dbReference type="ChEBI" id="CHEBI:57783"/>
        <dbReference type="ChEBI" id="CHEBI:58349"/>
        <dbReference type="EC" id="1.1.1.86"/>
    </reaction>
</comment>
<comment type="cofactor">
    <cofactor evidence="1">
        <name>Mg(2+)</name>
        <dbReference type="ChEBI" id="CHEBI:18420"/>
    </cofactor>
    <text evidence="1">Binds 2 magnesium ions per subunit.</text>
</comment>
<comment type="pathway">
    <text evidence="1">Amino-acid biosynthesis; L-isoleucine biosynthesis; L-isoleucine from 2-oxobutanoate: step 2/4.</text>
</comment>
<comment type="pathway">
    <text evidence="1">Amino-acid biosynthesis; L-valine biosynthesis; L-valine from pyruvate: step 2/4.</text>
</comment>
<comment type="similarity">
    <text evidence="1">Belongs to the ketol-acid reductoisomerase family.</text>
</comment>
<organism>
    <name type="scientific">Escherichia coli (strain 55989 / EAEC)</name>
    <dbReference type="NCBI Taxonomy" id="585055"/>
    <lineage>
        <taxon>Bacteria</taxon>
        <taxon>Pseudomonadati</taxon>
        <taxon>Pseudomonadota</taxon>
        <taxon>Gammaproteobacteria</taxon>
        <taxon>Enterobacterales</taxon>
        <taxon>Enterobacteriaceae</taxon>
        <taxon>Escherichia</taxon>
    </lineage>
</organism>